<comment type="function">
    <text evidence="1">Selectively hydrolyzes arachidonyl phospholipids in the sn-2 position releasing arachidonic acid. Together with its lysophospholipid activity, it is implicated in the initiation of the inflammatory response (By similarity).</text>
</comment>
<comment type="catalytic activity">
    <reaction>
        <text>a 1,2-diacyl-sn-glycero-3-phosphocholine + H2O = a 1-acyl-sn-glycero-3-phosphocholine + a fatty acid + H(+)</text>
        <dbReference type="Rhea" id="RHEA:15801"/>
        <dbReference type="ChEBI" id="CHEBI:15377"/>
        <dbReference type="ChEBI" id="CHEBI:15378"/>
        <dbReference type="ChEBI" id="CHEBI:28868"/>
        <dbReference type="ChEBI" id="CHEBI:57643"/>
        <dbReference type="ChEBI" id="CHEBI:58168"/>
        <dbReference type="EC" id="3.1.1.4"/>
    </reaction>
</comment>
<comment type="catalytic activity">
    <reaction>
        <text>a 1-acyl-sn-glycero-3-phosphocholine + H2O = sn-glycerol 3-phosphocholine + a fatty acid + H(+)</text>
        <dbReference type="Rhea" id="RHEA:15177"/>
        <dbReference type="ChEBI" id="CHEBI:15377"/>
        <dbReference type="ChEBI" id="CHEBI:15378"/>
        <dbReference type="ChEBI" id="CHEBI:16870"/>
        <dbReference type="ChEBI" id="CHEBI:28868"/>
        <dbReference type="ChEBI" id="CHEBI:58168"/>
        <dbReference type="EC" id="3.1.1.5"/>
    </reaction>
</comment>
<comment type="activity regulation">
    <text evidence="1">Stimulated by agonists such as ATP, EGF, thrombin and bradykinin as well as by cytosolic Ca(2+).</text>
</comment>
<comment type="subcellular location">
    <subcellularLocation>
        <location evidence="1">Cytoplasm</location>
    </subcellularLocation>
    <subcellularLocation>
        <location evidence="1">Cytoplasmic vesicle</location>
    </subcellularLocation>
    <text evidence="1">Translocates to membrane vesicles in a calcium-dependent fashion.</text>
</comment>
<comment type="domain">
    <text evidence="1">The N-terminal C2 domain associates with lipid membranes upon calcium binding. It modulates enzyme activity by presenting the active site to its substrate in response to elevations of cytosolic Ca(2+) (By similarity).</text>
</comment>
<gene>
    <name type="primary">pla2g4a</name>
    <name type="synonym">cpla2</name>
    <name type="synonym">pla2g4</name>
</gene>
<proteinExistence type="evidence at transcript level"/>
<evidence type="ECO:0000250" key="1"/>
<evidence type="ECO:0000255" key="2">
    <source>
        <dbReference type="PROSITE-ProRule" id="PRU00041"/>
    </source>
</evidence>
<evidence type="ECO:0000255" key="3">
    <source>
        <dbReference type="PROSITE-ProRule" id="PRU00555"/>
    </source>
</evidence>
<evidence type="ECO:0000256" key="4">
    <source>
        <dbReference type="SAM" id="MobiDB-lite"/>
    </source>
</evidence>
<reference key="1">
    <citation type="submission" date="2003-08" db="EMBL/GenBank/DDBJ databases">
        <authorList>
            <consortium name="NIH - Xenopus Gene Collection (XGC) project"/>
        </authorList>
    </citation>
    <scope>NUCLEOTIDE SEQUENCE [LARGE SCALE MRNA]</scope>
    <source>
        <tissue>Spleen</tissue>
    </source>
</reference>
<dbReference type="EC" id="3.1.1.4"/>
<dbReference type="EC" id="3.1.1.5"/>
<dbReference type="EMBL" id="BC056041">
    <property type="protein sequence ID" value="AAH56041.1"/>
    <property type="molecule type" value="mRNA"/>
</dbReference>
<dbReference type="RefSeq" id="NP_001080867.1">
    <property type="nucleotide sequence ID" value="NM_001087398.1"/>
</dbReference>
<dbReference type="RefSeq" id="XP_018111992.1">
    <property type="nucleotide sequence ID" value="XM_018256503.1"/>
</dbReference>
<dbReference type="SMR" id="Q7T0T9"/>
<dbReference type="GeneID" id="380561"/>
<dbReference type="KEGG" id="xla:380561"/>
<dbReference type="AGR" id="Xenbase:XB-GENE-5838883"/>
<dbReference type="CTD" id="380561"/>
<dbReference type="Xenbase" id="XB-GENE-5838883">
    <property type="gene designation" value="pla2g4a.L"/>
</dbReference>
<dbReference type="OMA" id="NQESWVQ"/>
<dbReference type="OrthoDB" id="419768at2759"/>
<dbReference type="Proteomes" id="UP000186698">
    <property type="component" value="Chromosome 4L"/>
</dbReference>
<dbReference type="Bgee" id="380561">
    <property type="expression patterns" value="Expressed in spleen and 18 other cell types or tissues"/>
</dbReference>
<dbReference type="GO" id="GO:0031410">
    <property type="term" value="C:cytoplasmic vesicle"/>
    <property type="evidence" value="ECO:0007669"/>
    <property type="project" value="UniProtKB-KW"/>
</dbReference>
<dbReference type="GO" id="GO:0005829">
    <property type="term" value="C:cytosol"/>
    <property type="evidence" value="ECO:0000318"/>
    <property type="project" value="GO_Central"/>
</dbReference>
<dbReference type="GO" id="GO:0005783">
    <property type="term" value="C:endoplasmic reticulum"/>
    <property type="evidence" value="ECO:0000318"/>
    <property type="project" value="GO_Central"/>
</dbReference>
<dbReference type="GO" id="GO:0005794">
    <property type="term" value="C:Golgi apparatus"/>
    <property type="evidence" value="ECO:0000318"/>
    <property type="project" value="GO_Central"/>
</dbReference>
<dbReference type="GO" id="GO:0005634">
    <property type="term" value="C:nucleus"/>
    <property type="evidence" value="ECO:0000318"/>
    <property type="project" value="GO_Central"/>
</dbReference>
<dbReference type="GO" id="GO:0005509">
    <property type="term" value="F:calcium ion binding"/>
    <property type="evidence" value="ECO:0000318"/>
    <property type="project" value="GO_Central"/>
</dbReference>
<dbReference type="GO" id="GO:0047498">
    <property type="term" value="F:calcium-dependent phospholipase A2 activity"/>
    <property type="evidence" value="ECO:0000318"/>
    <property type="project" value="GO_Central"/>
</dbReference>
<dbReference type="GO" id="GO:0005544">
    <property type="term" value="F:calcium-dependent phospholipid binding"/>
    <property type="evidence" value="ECO:0000318"/>
    <property type="project" value="GO_Central"/>
</dbReference>
<dbReference type="GO" id="GO:0004622">
    <property type="term" value="F:lysophospholipase activity"/>
    <property type="evidence" value="ECO:0007669"/>
    <property type="project" value="UniProtKB-EC"/>
</dbReference>
<dbReference type="GO" id="GO:0046475">
    <property type="term" value="P:glycerophospholipid catabolic process"/>
    <property type="evidence" value="ECO:0000318"/>
    <property type="project" value="GO_Central"/>
</dbReference>
<dbReference type="CDD" id="cd04036">
    <property type="entry name" value="C2_cPLA2"/>
    <property type="match status" value="1"/>
</dbReference>
<dbReference type="CDD" id="cd07200">
    <property type="entry name" value="cPLA2_Grp-IVA"/>
    <property type="match status" value="1"/>
</dbReference>
<dbReference type="FunFam" id="2.60.40.150:FF:000030">
    <property type="entry name" value="Phospholipase A2"/>
    <property type="match status" value="1"/>
</dbReference>
<dbReference type="Gene3D" id="2.60.40.150">
    <property type="entry name" value="C2 domain"/>
    <property type="match status" value="1"/>
</dbReference>
<dbReference type="Gene3D" id="3.40.1090.10">
    <property type="entry name" value="Cytosolic phospholipase A2 catalytic domain"/>
    <property type="match status" value="1"/>
</dbReference>
<dbReference type="InterPro" id="IPR016035">
    <property type="entry name" value="Acyl_Trfase/lysoPLipase"/>
</dbReference>
<dbReference type="InterPro" id="IPR041847">
    <property type="entry name" value="C2_cPLA2"/>
</dbReference>
<dbReference type="InterPro" id="IPR000008">
    <property type="entry name" value="C2_dom"/>
</dbReference>
<dbReference type="InterPro" id="IPR035892">
    <property type="entry name" value="C2_domain_sf"/>
</dbReference>
<dbReference type="InterPro" id="IPR002642">
    <property type="entry name" value="LysoPLipase_cat_dom"/>
</dbReference>
<dbReference type="PANTHER" id="PTHR10728">
    <property type="entry name" value="CYTOSOLIC PHOSPHOLIPASE A2"/>
    <property type="match status" value="1"/>
</dbReference>
<dbReference type="PANTHER" id="PTHR10728:SF13">
    <property type="entry name" value="CYTOSOLIC PHOSPHOLIPASE A2"/>
    <property type="match status" value="1"/>
</dbReference>
<dbReference type="Pfam" id="PF00168">
    <property type="entry name" value="C2"/>
    <property type="match status" value="1"/>
</dbReference>
<dbReference type="Pfam" id="PF01735">
    <property type="entry name" value="PLA2_B"/>
    <property type="match status" value="1"/>
</dbReference>
<dbReference type="SMART" id="SM00239">
    <property type="entry name" value="C2"/>
    <property type="match status" value="1"/>
</dbReference>
<dbReference type="SMART" id="SM00022">
    <property type="entry name" value="PLAc"/>
    <property type="match status" value="1"/>
</dbReference>
<dbReference type="SUPFAM" id="SSF49562">
    <property type="entry name" value="C2 domain (Calcium/lipid-binding domain, CaLB)"/>
    <property type="match status" value="1"/>
</dbReference>
<dbReference type="SUPFAM" id="SSF52151">
    <property type="entry name" value="FabD/lysophospholipase-like"/>
    <property type="match status" value="1"/>
</dbReference>
<dbReference type="PROSITE" id="PS50004">
    <property type="entry name" value="C2"/>
    <property type="match status" value="1"/>
</dbReference>
<dbReference type="PROSITE" id="PS51210">
    <property type="entry name" value="PLA2C"/>
    <property type="match status" value="1"/>
</dbReference>
<name>PA24A_XENLA</name>
<protein>
    <recommendedName>
        <fullName>Cytosolic phospholipase A2</fullName>
        <shortName>cPLA2</shortName>
    </recommendedName>
    <alternativeName>
        <fullName>Phospholipase A2 group IVA</fullName>
    </alternativeName>
    <domain>
        <recommendedName>
            <fullName>Phospholipase A2</fullName>
            <ecNumber>3.1.1.4</ecNumber>
        </recommendedName>
        <alternativeName>
            <fullName>Phosphatidylcholine 2-acylhydrolase</fullName>
        </alternativeName>
    </domain>
    <domain>
        <recommendedName>
            <fullName>Lysophospholipase</fullName>
            <ecNumber>3.1.1.5</ecNumber>
        </recommendedName>
    </domain>
</protein>
<accession>Q7T0T9</accession>
<keyword id="KW-0106">Calcium</keyword>
<keyword id="KW-0963">Cytoplasm</keyword>
<keyword id="KW-0968">Cytoplasmic vesicle</keyword>
<keyword id="KW-0378">Hydrolase</keyword>
<keyword id="KW-0442">Lipid degradation</keyword>
<keyword id="KW-0443">Lipid metabolism</keyword>
<keyword id="KW-0479">Metal-binding</keyword>
<keyword id="KW-1185">Reference proteome</keyword>
<sequence length="749" mass="85282">MASIDPYQHIIVEHQYSHRFTVTVIKATNVTKGTFGDMLDTPDPYVELYISSAPDSRKRTKHFNNNINPVWNETFEFILDPNQDNVLEITLMDANYVMDESLGTTTFPILSVKPGEKKQVPFTFNKVTEMILEFSLEVCSSTDLRFSMALCDQEKLFRQKRKNKVINGLRKLLGPEKTQDLNSTSRDVPVIAVLGSGGGFRAMIGFSGVMKALYESGVLDCATYVAGLSGSTWYMSTLYSHPDFPTKGPKEINKELMHNVSYNPLLLLTPQKVKRYVEALWKKKSSGQPVTFTDIFAMLIGETLIKDRMNRKLSHMQEKINDGQCPLPLFTCLHVKPDVSELMFADWVEFSPYEIGMAKYGTFMPPGLFGSKFFMGTVIKKYEENPLHFFMGVWGSAFSILINRVLGVSNNSKGSTMEEEIENLKPKHILGNDSSDSDDEMQEPKGTENAKAEEEYLRNNQASWVQRMLMAILGDSAIFNTREGRAGKVHNFMLGLNLNTSYPYSPLSGLCTQQSMEEDELDAAVADPDEFEQIYEPLDVKSKKIHIVDSGLTFNLPYPLILRPQRGVDLIISFDFSARPSDSSPPFKELLLAEKWARMNKLPFPKIDPHVFDREGLKECYIFKPKNTSVEKDCPTVIHFVLANLQFRNFKAPGVPRETTEEKESADFDIFDDPETPFSTFNFQYPNVAFKQLHDLMEFNTLNNINVIKQAMVESIEYRRQHPSRCSVSLNDVESRKLHHKDSQSKFQM</sequence>
<organism>
    <name type="scientific">Xenopus laevis</name>
    <name type="common">African clawed frog</name>
    <dbReference type="NCBI Taxonomy" id="8355"/>
    <lineage>
        <taxon>Eukaryota</taxon>
        <taxon>Metazoa</taxon>
        <taxon>Chordata</taxon>
        <taxon>Craniata</taxon>
        <taxon>Vertebrata</taxon>
        <taxon>Euteleostomi</taxon>
        <taxon>Amphibia</taxon>
        <taxon>Batrachia</taxon>
        <taxon>Anura</taxon>
        <taxon>Pipoidea</taxon>
        <taxon>Pipidae</taxon>
        <taxon>Xenopodinae</taxon>
        <taxon>Xenopus</taxon>
        <taxon>Xenopus</taxon>
    </lineage>
</organism>
<feature type="chain" id="PRO_0000345136" description="Cytosolic phospholipase A2">
    <location>
        <begin position="1"/>
        <end position="749"/>
    </location>
</feature>
<feature type="domain" description="C2" evidence="2">
    <location>
        <begin position="1"/>
        <end position="124"/>
    </location>
</feature>
<feature type="domain" description="PLA2c" evidence="3">
    <location>
        <begin position="138"/>
        <end position="740"/>
    </location>
</feature>
<feature type="region of interest" description="Phospholipid binding" evidence="1">
    <location>
        <begin position="1"/>
        <end position="178"/>
    </location>
</feature>
<feature type="region of interest" description="Disordered" evidence="4">
    <location>
        <begin position="428"/>
        <end position="452"/>
    </location>
</feature>
<feature type="region of interest" description="Disordered" evidence="4">
    <location>
        <begin position="729"/>
        <end position="749"/>
    </location>
</feature>
<feature type="compositionally biased region" description="Basic and acidic residues" evidence="4">
    <location>
        <begin position="442"/>
        <end position="452"/>
    </location>
</feature>
<feature type="compositionally biased region" description="Basic and acidic residues" evidence="4">
    <location>
        <begin position="733"/>
        <end position="749"/>
    </location>
</feature>
<feature type="active site" description="Nucleophile" evidence="1">
    <location>
        <position position="229"/>
    </location>
</feature>
<feature type="active site" description="Proton acceptor" evidence="1">
    <location>
        <position position="549"/>
    </location>
</feature>
<feature type="binding site" evidence="1">
    <location>
        <position position="40"/>
    </location>
    <ligand>
        <name>Ca(2+)</name>
        <dbReference type="ChEBI" id="CHEBI:29108"/>
        <label>1</label>
    </ligand>
</feature>
<feature type="binding site" evidence="1">
    <location>
        <position position="40"/>
    </location>
    <ligand>
        <name>Ca(2+)</name>
        <dbReference type="ChEBI" id="CHEBI:29108"/>
        <label>2</label>
    </ligand>
</feature>
<feature type="binding site" evidence="1">
    <location>
        <position position="41"/>
    </location>
    <ligand>
        <name>Ca(2+)</name>
        <dbReference type="ChEBI" id="CHEBI:29108"/>
        <label>1</label>
    </ligand>
</feature>
<feature type="binding site" evidence="1">
    <location>
        <position position="43"/>
    </location>
    <ligand>
        <name>Ca(2+)</name>
        <dbReference type="ChEBI" id="CHEBI:29108"/>
        <label>1</label>
    </ligand>
</feature>
<feature type="binding site" evidence="1">
    <location>
        <position position="43"/>
    </location>
    <ligand>
        <name>Ca(2+)</name>
        <dbReference type="ChEBI" id="CHEBI:29108"/>
        <label>2</label>
    </ligand>
</feature>
<feature type="binding site" evidence="1">
    <location>
        <position position="65"/>
    </location>
    <ligand>
        <name>Ca(2+)</name>
        <dbReference type="ChEBI" id="CHEBI:29108"/>
        <label>1</label>
    </ligand>
</feature>
<feature type="binding site" evidence="1">
    <location>
        <position position="93"/>
    </location>
    <ligand>
        <name>Ca(2+)</name>
        <dbReference type="ChEBI" id="CHEBI:29108"/>
        <label>2</label>
    </ligand>
</feature>
<feature type="binding site" evidence="1">
    <location>
        <position position="94"/>
    </location>
    <ligand>
        <name>Ca(2+)</name>
        <dbReference type="ChEBI" id="CHEBI:29108"/>
        <label>2</label>
    </ligand>
</feature>
<feature type="binding site" evidence="1">
    <location>
        <position position="95"/>
    </location>
    <ligand>
        <name>Ca(2+)</name>
        <dbReference type="ChEBI" id="CHEBI:29108"/>
        <label>2</label>
    </ligand>
</feature>